<evidence type="ECO:0000255" key="1">
    <source>
        <dbReference type="HAMAP-Rule" id="MF_00270"/>
    </source>
</evidence>
<evidence type="ECO:0000305" key="2"/>
<name>RS18_BURTA</name>
<feature type="chain" id="PRO_1000003467" description="Small ribosomal subunit protein bS18">
    <location>
        <begin position="1"/>
        <end position="91"/>
    </location>
</feature>
<protein>
    <recommendedName>
        <fullName evidence="1">Small ribosomal subunit protein bS18</fullName>
    </recommendedName>
    <alternativeName>
        <fullName evidence="2">30S ribosomal protein S18</fullName>
    </alternativeName>
</protein>
<keyword id="KW-0687">Ribonucleoprotein</keyword>
<keyword id="KW-0689">Ribosomal protein</keyword>
<keyword id="KW-0694">RNA-binding</keyword>
<keyword id="KW-0699">rRNA-binding</keyword>
<comment type="function">
    <text evidence="1">Binds as a heterodimer with protein bS6 to the central domain of the 16S rRNA, where it helps stabilize the platform of the 30S subunit.</text>
</comment>
<comment type="subunit">
    <text evidence="1">Part of the 30S ribosomal subunit. Forms a tight heterodimer with protein bS6.</text>
</comment>
<comment type="similarity">
    <text evidence="1">Belongs to the bacterial ribosomal protein bS18 family.</text>
</comment>
<proteinExistence type="inferred from homology"/>
<reference key="1">
    <citation type="journal article" date="2005" name="BMC Genomics">
        <title>Bacterial genome adaptation to niches: divergence of the potential virulence genes in three Burkholderia species of different survival strategies.</title>
        <authorList>
            <person name="Kim H.S."/>
            <person name="Schell M.A."/>
            <person name="Yu Y."/>
            <person name="Ulrich R.L."/>
            <person name="Sarria S.H."/>
            <person name="Nierman W.C."/>
            <person name="DeShazer D."/>
        </authorList>
    </citation>
    <scope>NUCLEOTIDE SEQUENCE [LARGE SCALE GENOMIC DNA]</scope>
    <source>
        <strain>ATCC 700388 / DSM 13276 / CCUG 48851 / CIP 106301 / E264</strain>
    </source>
</reference>
<sequence>MARPTGKKFDKRRQQQNPLFKRKKFCRFTAAGVEQIDYKDTETLKDFIGENGKITPARLTGTKAHYQRQLDTAIKRARFLALLPYTDQHKA</sequence>
<dbReference type="EMBL" id="CP000086">
    <property type="protein sequence ID" value="ABC37321.1"/>
    <property type="molecule type" value="Genomic_DNA"/>
</dbReference>
<dbReference type="RefSeq" id="WP_004193360.1">
    <property type="nucleotide sequence ID" value="NZ_CP008785.1"/>
</dbReference>
<dbReference type="SMR" id="Q2SWJ7"/>
<dbReference type="GeneID" id="93173028"/>
<dbReference type="KEGG" id="bte:BTH_I2181"/>
<dbReference type="HOGENOM" id="CLU_148710_0_3_4"/>
<dbReference type="Proteomes" id="UP000001930">
    <property type="component" value="Chromosome I"/>
</dbReference>
<dbReference type="GO" id="GO:0022627">
    <property type="term" value="C:cytosolic small ribosomal subunit"/>
    <property type="evidence" value="ECO:0007669"/>
    <property type="project" value="TreeGrafter"/>
</dbReference>
<dbReference type="GO" id="GO:0070181">
    <property type="term" value="F:small ribosomal subunit rRNA binding"/>
    <property type="evidence" value="ECO:0007669"/>
    <property type="project" value="TreeGrafter"/>
</dbReference>
<dbReference type="GO" id="GO:0003735">
    <property type="term" value="F:structural constituent of ribosome"/>
    <property type="evidence" value="ECO:0007669"/>
    <property type="project" value="InterPro"/>
</dbReference>
<dbReference type="GO" id="GO:0006412">
    <property type="term" value="P:translation"/>
    <property type="evidence" value="ECO:0007669"/>
    <property type="project" value="UniProtKB-UniRule"/>
</dbReference>
<dbReference type="Gene3D" id="4.10.640.10">
    <property type="entry name" value="Ribosomal protein S18"/>
    <property type="match status" value="1"/>
</dbReference>
<dbReference type="HAMAP" id="MF_00270">
    <property type="entry name" value="Ribosomal_bS18"/>
    <property type="match status" value="1"/>
</dbReference>
<dbReference type="InterPro" id="IPR001648">
    <property type="entry name" value="Ribosomal_bS18"/>
</dbReference>
<dbReference type="InterPro" id="IPR018275">
    <property type="entry name" value="Ribosomal_bS18_CS"/>
</dbReference>
<dbReference type="InterPro" id="IPR036870">
    <property type="entry name" value="Ribosomal_bS18_sf"/>
</dbReference>
<dbReference type="NCBIfam" id="TIGR00165">
    <property type="entry name" value="S18"/>
    <property type="match status" value="1"/>
</dbReference>
<dbReference type="PANTHER" id="PTHR13479">
    <property type="entry name" value="30S RIBOSOMAL PROTEIN S18"/>
    <property type="match status" value="1"/>
</dbReference>
<dbReference type="PANTHER" id="PTHR13479:SF40">
    <property type="entry name" value="SMALL RIBOSOMAL SUBUNIT PROTEIN BS18M"/>
    <property type="match status" value="1"/>
</dbReference>
<dbReference type="Pfam" id="PF01084">
    <property type="entry name" value="Ribosomal_S18"/>
    <property type="match status" value="1"/>
</dbReference>
<dbReference type="PRINTS" id="PR00974">
    <property type="entry name" value="RIBOSOMALS18"/>
</dbReference>
<dbReference type="SUPFAM" id="SSF46911">
    <property type="entry name" value="Ribosomal protein S18"/>
    <property type="match status" value="1"/>
</dbReference>
<dbReference type="PROSITE" id="PS00057">
    <property type="entry name" value="RIBOSOMAL_S18"/>
    <property type="match status" value="1"/>
</dbReference>
<accession>Q2SWJ7</accession>
<organism>
    <name type="scientific">Burkholderia thailandensis (strain ATCC 700388 / DSM 13276 / CCUG 48851 / CIP 106301 / E264)</name>
    <dbReference type="NCBI Taxonomy" id="271848"/>
    <lineage>
        <taxon>Bacteria</taxon>
        <taxon>Pseudomonadati</taxon>
        <taxon>Pseudomonadota</taxon>
        <taxon>Betaproteobacteria</taxon>
        <taxon>Burkholderiales</taxon>
        <taxon>Burkholderiaceae</taxon>
        <taxon>Burkholderia</taxon>
        <taxon>pseudomallei group</taxon>
    </lineage>
</organism>
<gene>
    <name evidence="1" type="primary">rpsR</name>
    <name type="ordered locus">BTH_I2181</name>
</gene>